<accession>P58010</accession>
<keyword id="KW-1003">Cell membrane</keyword>
<keyword id="KW-0472">Membrane</keyword>
<keyword id="KW-1185">Reference proteome</keyword>
<keyword id="KW-0812">Transmembrane</keyword>
<keyword id="KW-1133">Transmembrane helix</keyword>
<sequence length="168" mass="19408">MMIDVFLIALLLSILTGNIKNVLKYNYKGLYLFAIPFVLQLLPWKEILVPLSFVMLFLFFIWNRNIPGFKLMAIGAVLNGFTMSVNGGKMPVWEPTLKLLNLDLDFKHTAFTEFSWKTLLADYIPVYLPWGRKFVISVGDILVFIGVFIFFVLKPRFQTQPSRVPHES</sequence>
<organism>
    <name type="scientific">Thermotoga maritima (strain ATCC 43589 / DSM 3109 / JCM 10099 / NBRC 100826 / MSB8)</name>
    <dbReference type="NCBI Taxonomy" id="243274"/>
    <lineage>
        <taxon>Bacteria</taxon>
        <taxon>Thermotogati</taxon>
        <taxon>Thermotogota</taxon>
        <taxon>Thermotogae</taxon>
        <taxon>Thermotogales</taxon>
        <taxon>Thermotogaceae</taxon>
        <taxon>Thermotoga</taxon>
    </lineage>
</organism>
<dbReference type="EMBL" id="AE000512">
    <property type="status" value="NOT_ANNOTATED_CDS"/>
    <property type="molecule type" value="Genomic_DNA"/>
</dbReference>
<dbReference type="RefSeq" id="WP_004081768.1">
    <property type="nucleotide sequence ID" value="NC_000853.1"/>
</dbReference>
<dbReference type="PaxDb" id="243274-THEMA_06965"/>
<dbReference type="KEGG" id="tmi:THEMA_06965"/>
<dbReference type="KEGG" id="tmw:THMA_1499"/>
<dbReference type="eggNOG" id="ENOG5033BXS">
    <property type="taxonomic scope" value="Bacteria"/>
</dbReference>
<dbReference type="InParanoid" id="P58010"/>
<dbReference type="Proteomes" id="UP000008183">
    <property type="component" value="Chromosome"/>
</dbReference>
<dbReference type="GO" id="GO:0005886">
    <property type="term" value="C:plasma membrane"/>
    <property type="evidence" value="ECO:0007669"/>
    <property type="project" value="UniProtKB-SubCell"/>
</dbReference>
<dbReference type="InterPro" id="IPR035168">
    <property type="entry name" value="DUF5317"/>
</dbReference>
<dbReference type="Pfam" id="PF17248">
    <property type="entry name" value="DUF5317"/>
    <property type="match status" value="1"/>
</dbReference>
<reference key="1">
    <citation type="journal article" date="1999" name="Nature">
        <title>Evidence for lateral gene transfer between Archaea and Bacteria from genome sequence of Thermotoga maritima.</title>
        <authorList>
            <person name="Nelson K.E."/>
            <person name="Clayton R.A."/>
            <person name="Gill S.R."/>
            <person name="Gwinn M.L."/>
            <person name="Dodson R.J."/>
            <person name="Haft D.H."/>
            <person name="Hickey E.K."/>
            <person name="Peterson J.D."/>
            <person name="Nelson W.C."/>
            <person name="Ketchum K.A."/>
            <person name="McDonald L.A."/>
            <person name="Utterback T.R."/>
            <person name="Malek J.A."/>
            <person name="Linher K.D."/>
            <person name="Garrett M.M."/>
            <person name="Stewart A.M."/>
            <person name="Cotton M.D."/>
            <person name="Pratt M.S."/>
            <person name="Phillips C.A."/>
            <person name="Richardson D.L."/>
            <person name="Heidelberg J.F."/>
            <person name="Sutton G.G."/>
            <person name="Fleischmann R.D."/>
            <person name="Eisen J.A."/>
            <person name="White O."/>
            <person name="Salzberg S.L."/>
            <person name="Smith H.O."/>
            <person name="Venter J.C."/>
            <person name="Fraser C.M."/>
        </authorList>
    </citation>
    <scope>NUCLEOTIDE SEQUENCE [LARGE SCALE GENOMIC DNA]</scope>
    <source>
        <strain>ATCC 43589 / DSM 3109 / JCM 10099 / NBRC 100826 / MSB8</strain>
    </source>
</reference>
<reference key="2">
    <citation type="unpublished observations" date="2001-04">
        <authorList>
            <person name="Medigue C."/>
            <person name="Bocs S."/>
        </authorList>
    </citation>
    <scope>IDENTIFICATION</scope>
</reference>
<name>YE6A_THEMA</name>
<feature type="chain" id="PRO_0000216220" description="Uncharacterized protein TM_1467.1">
    <location>
        <begin position="1"/>
        <end position="168"/>
    </location>
</feature>
<feature type="transmembrane region" description="Helical" evidence="1">
    <location>
        <begin position="41"/>
        <end position="61"/>
    </location>
</feature>
<feature type="transmembrane region" description="Helical" evidence="1">
    <location>
        <begin position="133"/>
        <end position="153"/>
    </location>
</feature>
<proteinExistence type="predicted"/>
<gene>
    <name type="ordered locus">TM_1467.1</name>
</gene>
<comment type="subcellular location">
    <subcellularLocation>
        <location evidence="2">Cell membrane</location>
        <topology evidence="2">Multi-pass membrane protein</topology>
    </subcellularLocation>
</comment>
<protein>
    <recommendedName>
        <fullName>Uncharacterized protein TM_1467.1</fullName>
    </recommendedName>
</protein>
<evidence type="ECO:0000255" key="1"/>
<evidence type="ECO:0000305" key="2"/>